<protein>
    <recommendedName>
        <fullName>CTP-dependent diacylglycerol kinase 1</fullName>
        <ecNumber>2.7.1.174</ecNumber>
    </recommendedName>
    <alternativeName>
        <fullName>Diglyceride kinase 1</fullName>
        <shortName>DAG kinase 1</shortName>
    </alternativeName>
    <alternativeName>
        <fullName evidence="12">High-copy suppressor of SLY1 defect protein 1</fullName>
    </alternativeName>
</protein>
<accession>Q12382</accession>
<accession>D6W310</accession>
<evidence type="ECO:0000255" key="1"/>
<evidence type="ECO:0000256" key="2">
    <source>
        <dbReference type="SAM" id="MobiDB-lite"/>
    </source>
</evidence>
<evidence type="ECO:0000269" key="3">
    <source>
    </source>
</evidence>
<evidence type="ECO:0000269" key="4">
    <source>
    </source>
</evidence>
<evidence type="ECO:0000269" key="5">
    <source>
    </source>
</evidence>
<evidence type="ECO:0000269" key="6">
    <source>
    </source>
</evidence>
<evidence type="ECO:0000269" key="7">
    <source>
    </source>
</evidence>
<evidence type="ECO:0000269" key="8">
    <source>
    </source>
</evidence>
<evidence type="ECO:0000269" key="9">
    <source>
    </source>
</evidence>
<evidence type="ECO:0000269" key="10">
    <source>
    </source>
</evidence>
<evidence type="ECO:0000269" key="11">
    <source>
    </source>
</evidence>
<evidence type="ECO:0000303" key="12">
    <source>
    </source>
</evidence>
<evidence type="ECO:0000305" key="13"/>
<evidence type="ECO:0000305" key="14">
    <source>
    </source>
</evidence>
<evidence type="ECO:0000305" key="15">
    <source>
    </source>
</evidence>
<evidence type="ECO:0000305" key="16">
    <source>
    </source>
</evidence>
<evidence type="ECO:0000305" key="17">
    <source>
    </source>
</evidence>
<evidence type="ECO:0007744" key="18">
    <source>
    </source>
</evidence>
<comment type="function">
    <text evidence="3 4 8 10 11">CTP-dependent diacylglycerol kinase that catalyzes the phosphorylation of diacylglycerol (DAG) to phosphatidate (PA). Controls phosphatidate levels at the nuclear envelope. Counteracts the activity of PA phosphatase PAH1/SMP2, controlling the levels of PA and DAG for the synthesis of triacylglycerol and membrane phospholipids (PubMed:18458075, PubMed:27834677). May be involved in vesicle trafficking between the endoplasmic reticulum and the Golgi apparatus (PubMed:11481671). Required to convert triacylglycerol-derived DAG to PA for phospholipid synthesis during growth resumption from stationary phase in the absence of de novo fatty acid synthesis (PubMed:21071438). Involved in the resistance to nickel chloride and nalidixic acid (PubMed:10407277).</text>
</comment>
<comment type="catalytic activity">
    <reaction evidence="8 9">
        <text>a 1,2-diacyl-sn-glycerol + CTP = a 1,2-diacyl-sn-glycero-3-phosphate + CDP + H(+)</text>
        <dbReference type="Rhea" id="RHEA:25948"/>
        <dbReference type="ChEBI" id="CHEBI:15378"/>
        <dbReference type="ChEBI" id="CHEBI:17815"/>
        <dbReference type="ChEBI" id="CHEBI:37563"/>
        <dbReference type="ChEBI" id="CHEBI:58069"/>
        <dbReference type="ChEBI" id="CHEBI:58608"/>
        <dbReference type="EC" id="2.7.1.174"/>
    </reaction>
</comment>
<comment type="catalytic activity">
    <reaction evidence="9">
        <text>1,2-di-(9Z-octadecenoyl)-sn-glycerol + CTP = 1,2-di-(9Z-octadecenoyl)-sn-glycero-3-phosphate + CDP + H(+)</text>
        <dbReference type="Rhea" id="RHEA:43656"/>
        <dbReference type="ChEBI" id="CHEBI:15378"/>
        <dbReference type="ChEBI" id="CHEBI:37563"/>
        <dbReference type="ChEBI" id="CHEBI:52333"/>
        <dbReference type="ChEBI" id="CHEBI:58069"/>
        <dbReference type="ChEBI" id="CHEBI:74546"/>
    </reaction>
    <physiologicalReaction direction="left-to-right" evidence="17">
        <dbReference type="Rhea" id="RHEA:43657"/>
    </physiologicalReaction>
</comment>
<comment type="cofactor">
    <cofactor evidence="9">
        <name>Ca(2+)</name>
        <dbReference type="ChEBI" id="CHEBI:29108"/>
    </cofactor>
    <cofactor evidence="9">
        <name>Mg(2+)</name>
        <dbReference type="ChEBI" id="CHEBI:18420"/>
    </cofactor>
</comment>
<comment type="activity regulation">
    <text evidence="9">Inhibited by N-ethylmaleimide, dCTP, and sphingoid bases including sphinganine, sphingosine and phytosphingosine. DAG pyrophosphate, cardiolipin, CDP-DAG, and lyso-PA inhibited activity by 23-66%. Also inhibited by Ca(2+) concentrations of more than 1 mM, by addition of EDTA or EGTA at 5 mM, and by 5 mM Mn(2+) and Zn(2+). Stimulated by major membrane phospholipids including phosphatidylcholine, phosphatidylethanolamine, phosphatidylinositol, phosphatidylserine, phosphatidylglycerol, and phosphatidate. Also stimulated to a maximum by addition of TritonX-100 at a concentration of 1 mM, followed by an apparent inhibition of activity at concentrations above 1 mM.</text>
</comment>
<comment type="biophysicochemical properties">
    <kinetics>
        <KM evidence="9">0.3 mM for CTP</KM>
        <KM evidence="9">0.4 mM for dCTP</KM>
        <Vmax evidence="9">0.018 nM/min/mg enzyme</Vmax>
    </kinetics>
    <phDependence>
        <text evidence="9">Optimum pH is 7.0-7.5.</text>
    </phDependence>
    <temperatureDependence>
        <text evidence="9">Maximum activity at 30 degrees Celsius. Labile above 40 degrees Celsius.</text>
    </temperatureDependence>
</comment>
<comment type="subcellular location">
    <subcellularLocation>
        <location evidence="4 5 8">Endoplasmic reticulum membrane</location>
        <topology evidence="14 16">Multi-pass membrane protein</topology>
    </subcellularLocation>
    <subcellularLocation>
        <location evidence="8">Nucleus membrane</location>
        <topology evidence="16">Multi-pass membrane protein</topology>
    </subcellularLocation>
</comment>
<comment type="PTM">
    <text evidence="11">CKII-mediated phosphorylation of Ser-45 and Ser-46 regulates its function in the production of PA.</text>
</comment>
<comment type="miscellaneous">
    <text evidence="6">Present with 784 molecules/cell in log phase SD medium.</text>
</comment>
<comment type="miscellaneous">
    <text evidence="16">Rescues the lethality of dephosphorylated PAH1/SMP2. Overexpression causes the appearance of phosphatidate-enriched membranes around the nucleus, leading to expansion of the nuclear membrane without proliferation of the cortical endoplasmic reticulum membrane. Deletion restores normal nuclear structure in PAH1/SMP2 deleted cells and returns the level of INO1 mRNA to normal. Deletion does not affect the abnormal levels of phosphatidylinositol and major neutral lipid triacylglycerol seen in the PAH1/SMP2 deletion mutant.</text>
</comment>
<comment type="similarity">
    <text evidence="13">Belongs to the DGK1 family.</text>
</comment>
<feature type="chain" id="PRO_0000240382" description="CTP-dependent diacylglycerol kinase 1">
    <location>
        <begin position="1"/>
        <end position="290"/>
    </location>
</feature>
<feature type="topological domain" description="Lumenal" evidence="15">
    <location>
        <begin position="1"/>
        <end position="77"/>
    </location>
</feature>
<feature type="transmembrane region" description="Helical" evidence="1">
    <location>
        <begin position="78"/>
        <end position="95"/>
    </location>
</feature>
<feature type="topological domain" description="Cytoplasmic" evidence="15">
    <location>
        <begin position="96"/>
        <end position="103"/>
    </location>
</feature>
<feature type="transmembrane region" description="Helical" evidence="1">
    <location>
        <begin position="104"/>
        <end position="124"/>
    </location>
</feature>
<feature type="topological domain" description="Lumenal" evidence="15">
    <location>
        <begin position="125"/>
        <end position="140"/>
    </location>
</feature>
<feature type="transmembrane region" description="Helical" evidence="1">
    <location>
        <begin position="141"/>
        <end position="161"/>
    </location>
</feature>
<feature type="topological domain" description="Cytoplasmic" evidence="15">
    <location>
        <begin position="162"/>
        <end position="163"/>
    </location>
</feature>
<feature type="transmembrane region" description="Helical" evidence="1">
    <location>
        <begin position="164"/>
        <end position="184"/>
    </location>
</feature>
<feature type="topological domain" description="Lumenal" evidence="15">
    <location>
        <begin position="185"/>
        <end position="203"/>
    </location>
</feature>
<feature type="transmembrane region" description="Helical" evidence="1">
    <location>
        <begin position="204"/>
        <end position="224"/>
    </location>
</feature>
<feature type="topological domain" description="Cytoplasmic" evidence="15">
    <location>
        <begin position="225"/>
        <end position="244"/>
    </location>
</feature>
<feature type="transmembrane region" description="Helical" evidence="1">
    <location>
        <begin position="245"/>
        <end position="265"/>
    </location>
</feature>
<feature type="topological domain" description="Lumenal" evidence="7">
    <location>
        <begin position="266"/>
        <end position="290"/>
    </location>
</feature>
<feature type="region of interest" description="Disordered" evidence="2">
    <location>
        <begin position="1"/>
        <end position="33"/>
    </location>
</feature>
<feature type="compositionally biased region" description="Polar residues" evidence="2">
    <location>
        <begin position="23"/>
        <end position="33"/>
    </location>
</feature>
<feature type="modified residue" description="Phosphoserine" evidence="18">
    <location>
        <position position="44"/>
    </location>
</feature>
<feature type="modified residue" description="Phosphoserine" evidence="11 18">
    <location>
        <position position="45"/>
    </location>
</feature>
<feature type="modified residue" description="Phosphoserine" evidence="11 18">
    <location>
        <position position="46"/>
    </location>
</feature>
<feature type="glycosylation site" description="N-linked (GlcNAc...) asparagine" evidence="1">
    <location>
        <position position="11"/>
    </location>
</feature>
<feature type="glycosylation site" description="N-linked (GlcNAc...) asparagine" evidence="1">
    <location>
        <position position="197"/>
    </location>
</feature>
<feature type="glycosylation site" description="N-linked (GlcNAc...) asparagine" evidence="1">
    <location>
        <position position="270"/>
    </location>
</feature>
<feature type="mutagenesis site" description="Abolishes the stationary phase-dependent stimulation of DAG kinase activity." evidence="11">
    <original>SS</original>
    <variation>AA</variation>
    <location>
        <begin position="45"/>
        <end position="46"/>
    </location>
</feature>
<feature type="mutagenesis site" description="Abolishes the stationary phase-dependent stimulation of DAG kinase activity." evidence="11">
    <original>S</original>
    <variation>A</variation>
    <location>
        <position position="46"/>
    </location>
</feature>
<feature type="mutagenesis site" description="Loss of kinase activity. Not temperature-sensitive for growth. Regular shaped nuclear membrane structure." evidence="9">
    <original>R</original>
    <variation>A</variation>
    <location>
        <position position="76"/>
    </location>
</feature>
<feature type="mutagenesis site" description="Loss of kinase activity. Not temperature-sensitive for growth. Regular shaped nuclear membrane structure." evidence="9">
    <original>K</original>
    <variation>A</variation>
    <location>
        <position position="77"/>
    </location>
</feature>
<feature type="mutagenesis site" description="No kinase activity. Not temperature-sensitive for growth. Does not trigger nuclear membrane expansion." evidence="8 9">
    <original>D</original>
    <variation>A</variation>
    <location>
        <position position="177"/>
    </location>
</feature>
<feature type="mutagenesis site" description="70% reduction in kinase activity. Not temperature-sensitive for growth. Regular shaped nuclear membrane structure." evidence="9">
    <original>G</original>
    <variation>A</variation>
    <location>
        <position position="184"/>
    </location>
</feature>
<proteinExistence type="evidence at protein level"/>
<keyword id="KW-0106">Calcium</keyword>
<keyword id="KW-0256">Endoplasmic reticulum</keyword>
<keyword id="KW-0931">ER-Golgi transport</keyword>
<keyword id="KW-0325">Glycoprotein</keyword>
<keyword id="KW-0418">Kinase</keyword>
<keyword id="KW-0460">Magnesium</keyword>
<keyword id="KW-0472">Membrane</keyword>
<keyword id="KW-0539">Nucleus</keyword>
<keyword id="KW-0597">Phosphoprotein</keyword>
<keyword id="KW-1185">Reference proteome</keyword>
<keyword id="KW-0808">Transferase</keyword>
<keyword id="KW-0812">Transmembrane</keyword>
<keyword id="KW-1133">Transmembrane helix</keyword>
<keyword id="KW-0813">Transport</keyword>
<gene>
    <name type="primary">DGK1</name>
    <name evidence="12" type="synonym">HSD1</name>
    <name type="ordered locus">YOR311C</name>
    <name type="ORF">O6111</name>
</gene>
<dbReference type="EC" id="2.7.1.174"/>
<dbReference type="EMBL" id="X90565">
    <property type="protein sequence ID" value="CAA62166.1"/>
    <property type="molecule type" value="Genomic_DNA"/>
</dbReference>
<dbReference type="EMBL" id="Z75219">
    <property type="protein sequence ID" value="CAA99631.1"/>
    <property type="molecule type" value="Genomic_DNA"/>
</dbReference>
<dbReference type="EMBL" id="BK006948">
    <property type="protein sequence ID" value="DAA11076.1"/>
    <property type="molecule type" value="Genomic_DNA"/>
</dbReference>
<dbReference type="PIR" id="S58323">
    <property type="entry name" value="S58323"/>
</dbReference>
<dbReference type="RefSeq" id="NP_014956.3">
    <property type="nucleotide sequence ID" value="NM_001183731.3"/>
</dbReference>
<dbReference type="BioGRID" id="34699">
    <property type="interactions" value="488"/>
</dbReference>
<dbReference type="DIP" id="DIP-5021N"/>
<dbReference type="FunCoup" id="Q12382">
    <property type="interactions" value="81"/>
</dbReference>
<dbReference type="IntAct" id="Q12382">
    <property type="interactions" value="1"/>
</dbReference>
<dbReference type="STRING" id="4932.YOR311C"/>
<dbReference type="SwissLipids" id="SLP:000000046"/>
<dbReference type="GlyCosmos" id="Q12382">
    <property type="glycosylation" value="3 sites, No reported glycans"/>
</dbReference>
<dbReference type="GlyGen" id="Q12382">
    <property type="glycosylation" value="3 sites"/>
</dbReference>
<dbReference type="iPTMnet" id="Q12382"/>
<dbReference type="PaxDb" id="4932-YOR311C"/>
<dbReference type="PeptideAtlas" id="Q12382"/>
<dbReference type="EnsemblFungi" id="YOR311C_mRNA">
    <property type="protein sequence ID" value="YOR311C"/>
    <property type="gene ID" value="YOR311C"/>
</dbReference>
<dbReference type="GeneID" id="854488"/>
<dbReference type="KEGG" id="sce:YOR311C"/>
<dbReference type="AGR" id="SGD:S000005838"/>
<dbReference type="SGD" id="S000005838">
    <property type="gene designation" value="DGK1"/>
</dbReference>
<dbReference type="VEuPathDB" id="FungiDB:YOR311C"/>
<dbReference type="eggNOG" id="KOG4453">
    <property type="taxonomic scope" value="Eukaryota"/>
</dbReference>
<dbReference type="HOGENOM" id="CLU_031477_0_1_1"/>
<dbReference type="InParanoid" id="Q12382"/>
<dbReference type="OMA" id="TKHEVPR"/>
<dbReference type="OrthoDB" id="5673at2759"/>
<dbReference type="BioCyc" id="MetaCyc:G3O-33794-MONOMER"/>
<dbReference type="BioCyc" id="YEAST:G3O-33794-MONOMER"/>
<dbReference type="BRENDA" id="2.7.1.174">
    <property type="organism ID" value="984"/>
</dbReference>
<dbReference type="SABIO-RK" id="Q12382"/>
<dbReference type="BioGRID-ORCS" id="854488">
    <property type="hits" value="1 hit in 10 CRISPR screens"/>
</dbReference>
<dbReference type="PRO" id="PR:Q12382"/>
<dbReference type="Proteomes" id="UP000002311">
    <property type="component" value="Chromosome XV"/>
</dbReference>
<dbReference type="RNAct" id="Q12382">
    <property type="molecule type" value="protein"/>
</dbReference>
<dbReference type="GO" id="GO:0005783">
    <property type="term" value="C:endoplasmic reticulum"/>
    <property type="evidence" value="ECO:0007005"/>
    <property type="project" value="SGD"/>
</dbReference>
<dbReference type="GO" id="GO:0005789">
    <property type="term" value="C:endoplasmic reticulum membrane"/>
    <property type="evidence" value="ECO:0000314"/>
    <property type="project" value="SGD"/>
</dbReference>
<dbReference type="GO" id="GO:0031965">
    <property type="term" value="C:nuclear membrane"/>
    <property type="evidence" value="ECO:0007669"/>
    <property type="project" value="UniProtKB-SubCell"/>
</dbReference>
<dbReference type="GO" id="GO:0004143">
    <property type="term" value="F:ATP-dependent diacylglycerol kinase activity"/>
    <property type="evidence" value="ECO:0007669"/>
    <property type="project" value="InterPro"/>
</dbReference>
<dbReference type="GO" id="GO:0141035">
    <property type="term" value="F:CTP-dependent diacylglycerol kinase activity"/>
    <property type="evidence" value="ECO:0000314"/>
    <property type="project" value="SGD"/>
</dbReference>
<dbReference type="GO" id="GO:0001727">
    <property type="term" value="F:lipid kinase activity"/>
    <property type="evidence" value="ECO:0000318"/>
    <property type="project" value="GO_Central"/>
</dbReference>
<dbReference type="GO" id="GO:0006654">
    <property type="term" value="P:phosphatidic acid biosynthetic process"/>
    <property type="evidence" value="ECO:0000314"/>
    <property type="project" value="SGD"/>
</dbReference>
<dbReference type="GO" id="GO:2001210">
    <property type="term" value="P:regulation of isopentenyl diphosphate biosynthetic process, mevalonate pathway"/>
    <property type="evidence" value="ECO:0000315"/>
    <property type="project" value="SGD"/>
</dbReference>
<dbReference type="GO" id="GO:0016192">
    <property type="term" value="P:vesicle-mediated transport"/>
    <property type="evidence" value="ECO:0007669"/>
    <property type="project" value="UniProtKB-KW"/>
</dbReference>
<dbReference type="InterPro" id="IPR037997">
    <property type="entry name" value="Dgk1-like"/>
</dbReference>
<dbReference type="PANTHER" id="PTHR31303">
    <property type="entry name" value="CTP-DEPENDENT DIACYLGLYCEROL KINASE 1"/>
    <property type="match status" value="1"/>
</dbReference>
<dbReference type="PANTHER" id="PTHR31303:SF1">
    <property type="entry name" value="CTP-DEPENDENT DIACYLGLYCEROL KINASE 1"/>
    <property type="match status" value="1"/>
</dbReference>
<name>DGK1_YEAST</name>
<sequence>MGTEDAIALPNSTLEPRTEAKQRLSSKSHQVSAKVTIPAKEEISSSDDDAHVPVTEIHLKSHEWFGDFITKHEIPRKVFHSSIGFITLYLYTQGINYKNVLWPLIYAFIILFILDLIRLNWPFFNMLYCRTVGALMRKKEIHTYNGVLWYILGLIFSFNFFSKDVTLISLFLLSWSDTAAATIGRKYGHLTPKVARNKSLAGSIAAFTVGVITCWVFYGYFVPAYSYVNKPGEIQWSPETSRLSLNMLSLLGGVVAALSEGIDLFNWDDNFTIPVLSSLFMNAVIKTFKK</sequence>
<reference key="1">
    <citation type="journal article" date="1996" name="Yeast">
        <title>Sequencing of a 35.71 kb DNA segment on the right arm of yeast chromosome XV reveals regions of similarity to chromosomes I and XIII.</title>
        <authorList>
            <person name="Pearson B.M."/>
            <person name="Hernando Y."/>
            <person name="Payne J."/>
            <person name="Wolf S.S."/>
            <person name="Kalogeropoulos A."/>
            <person name="Schweizer M."/>
        </authorList>
    </citation>
    <scope>NUCLEOTIDE SEQUENCE [GENOMIC DNA]</scope>
    <source>
        <strain>ATCC 96604 / S288c / FY1679</strain>
    </source>
</reference>
<reference key="2">
    <citation type="journal article" date="1997" name="Nature">
        <title>The nucleotide sequence of Saccharomyces cerevisiae chromosome XV.</title>
        <authorList>
            <person name="Dujon B."/>
            <person name="Albermann K."/>
            <person name="Aldea M."/>
            <person name="Alexandraki D."/>
            <person name="Ansorge W."/>
            <person name="Arino J."/>
            <person name="Benes V."/>
            <person name="Bohn C."/>
            <person name="Bolotin-Fukuhara M."/>
            <person name="Bordonne R."/>
            <person name="Boyer J."/>
            <person name="Camasses A."/>
            <person name="Casamayor A."/>
            <person name="Casas C."/>
            <person name="Cheret G."/>
            <person name="Cziepluch C."/>
            <person name="Daignan-Fornier B."/>
            <person name="Dang V.-D."/>
            <person name="de Haan M."/>
            <person name="Delius H."/>
            <person name="Durand P."/>
            <person name="Fairhead C."/>
            <person name="Feldmann H."/>
            <person name="Gaillon L."/>
            <person name="Galisson F."/>
            <person name="Gamo F.-J."/>
            <person name="Gancedo C."/>
            <person name="Goffeau A."/>
            <person name="Goulding S.E."/>
            <person name="Grivell L.A."/>
            <person name="Habbig B."/>
            <person name="Hand N.J."/>
            <person name="Hani J."/>
            <person name="Hattenhorst U."/>
            <person name="Hebling U."/>
            <person name="Hernando Y."/>
            <person name="Herrero E."/>
            <person name="Heumann K."/>
            <person name="Hiesel R."/>
            <person name="Hilger F."/>
            <person name="Hofmann B."/>
            <person name="Hollenberg C.P."/>
            <person name="Hughes B."/>
            <person name="Jauniaux J.-C."/>
            <person name="Kalogeropoulos A."/>
            <person name="Katsoulou C."/>
            <person name="Kordes E."/>
            <person name="Lafuente M.J."/>
            <person name="Landt O."/>
            <person name="Louis E.J."/>
            <person name="Maarse A.C."/>
            <person name="Madania A."/>
            <person name="Mannhaupt G."/>
            <person name="Marck C."/>
            <person name="Martin R.P."/>
            <person name="Mewes H.-W."/>
            <person name="Michaux G."/>
            <person name="Paces V."/>
            <person name="Parle-McDermott A.G."/>
            <person name="Pearson B.M."/>
            <person name="Perrin A."/>
            <person name="Pettersson B."/>
            <person name="Poch O."/>
            <person name="Pohl T.M."/>
            <person name="Poirey R."/>
            <person name="Portetelle D."/>
            <person name="Pujol A."/>
            <person name="Purnelle B."/>
            <person name="Ramezani Rad M."/>
            <person name="Rechmann S."/>
            <person name="Schwager C."/>
            <person name="Schweizer M."/>
            <person name="Sor F."/>
            <person name="Sterky F."/>
            <person name="Tarassov I.A."/>
            <person name="Teodoru C."/>
            <person name="Tettelin H."/>
            <person name="Thierry A."/>
            <person name="Tobiasch E."/>
            <person name="Tzermia M."/>
            <person name="Uhlen M."/>
            <person name="Unseld M."/>
            <person name="Valens M."/>
            <person name="Vandenbol M."/>
            <person name="Vetter I."/>
            <person name="Vlcek C."/>
            <person name="Voet M."/>
            <person name="Volckaert G."/>
            <person name="Voss H."/>
            <person name="Wambutt R."/>
            <person name="Wedler H."/>
            <person name="Wiemann S."/>
            <person name="Winsor B."/>
            <person name="Wolfe K.H."/>
            <person name="Zollner A."/>
            <person name="Zumstein E."/>
            <person name="Kleine K."/>
        </authorList>
    </citation>
    <scope>NUCLEOTIDE SEQUENCE [LARGE SCALE GENOMIC DNA]</scope>
    <source>
        <strain>ATCC 204508 / S288c</strain>
    </source>
</reference>
<reference key="3">
    <citation type="journal article" date="2014" name="G3 (Bethesda)">
        <title>The reference genome sequence of Saccharomyces cerevisiae: Then and now.</title>
        <authorList>
            <person name="Engel S.R."/>
            <person name="Dietrich F.S."/>
            <person name="Fisk D.G."/>
            <person name="Binkley G."/>
            <person name="Balakrishnan R."/>
            <person name="Costanzo M.C."/>
            <person name="Dwight S.S."/>
            <person name="Hitz B.C."/>
            <person name="Karra K."/>
            <person name="Nash R.S."/>
            <person name="Weng S."/>
            <person name="Wong E.D."/>
            <person name="Lloyd P."/>
            <person name="Skrzypek M.S."/>
            <person name="Miyasato S.R."/>
            <person name="Simison M."/>
            <person name="Cherry J.M."/>
        </authorList>
    </citation>
    <scope>GENOME REANNOTATION</scope>
    <source>
        <strain>ATCC 204508 / S288c</strain>
    </source>
</reference>
<reference key="4">
    <citation type="journal article" date="1999" name="Yeast">
        <title>Chemotyping of yeast mutants using robotics.</title>
        <authorList>
            <person name="Rieger K.-J."/>
            <person name="El-Alama M."/>
            <person name="Stein G."/>
            <person name="Bradshaw C."/>
            <person name="Slonimski P.P."/>
            <person name="Maundrell K."/>
        </authorList>
    </citation>
    <scope>FUNCTION</scope>
</reference>
<reference key="5">
    <citation type="journal article" date="2001" name="Yeast">
        <title>Multicopy suppressors of the sly1 temperature-sensitive mutation in the ER-Golgi vesicular transport in Saccharomyces cerevisiae.</title>
        <authorList>
            <person name="Kosodo Y."/>
            <person name="Imai K."/>
            <person name="Hirata A."/>
            <person name="Noda Y."/>
            <person name="Takatsuki A."/>
            <person name="Adachi H."/>
            <person name="Yoda K."/>
        </authorList>
    </citation>
    <scope>FUNCTION</scope>
    <scope>SUBCELLULAR LOCATION</scope>
</reference>
<reference key="6">
    <citation type="journal article" date="2003" name="Nature">
        <title>Global analysis of protein localization in budding yeast.</title>
        <authorList>
            <person name="Huh W.-K."/>
            <person name="Falvo J.V."/>
            <person name="Gerke L.C."/>
            <person name="Carroll A.S."/>
            <person name="Howson R.W."/>
            <person name="Weissman J.S."/>
            <person name="O'Shea E.K."/>
        </authorList>
    </citation>
    <scope>SUBCELLULAR LOCATION [LARGE SCALE ANALYSIS]</scope>
</reference>
<reference key="7">
    <citation type="journal article" date="2003" name="Nature">
        <title>Global analysis of protein expression in yeast.</title>
        <authorList>
            <person name="Ghaemmaghami S."/>
            <person name="Huh W.-K."/>
            <person name="Bower K."/>
            <person name="Howson R.W."/>
            <person name="Belle A."/>
            <person name="Dephoure N."/>
            <person name="O'Shea E.K."/>
            <person name="Weissman J.S."/>
        </authorList>
    </citation>
    <scope>LEVEL OF PROTEIN EXPRESSION [LARGE SCALE ANALYSIS]</scope>
</reference>
<reference key="8">
    <citation type="journal article" date="2006" name="Proc. Natl. Acad. Sci. U.S.A.">
        <title>A global topology map of the Saccharomyces cerevisiae membrane proteome.</title>
        <authorList>
            <person name="Kim H."/>
            <person name="Melen K."/>
            <person name="Oesterberg M."/>
            <person name="von Heijne G."/>
        </authorList>
    </citation>
    <scope>TOPOLOGY [LARGE SCALE ANALYSIS]</scope>
    <source>
        <strain>ATCC 208353 / W303-1A</strain>
    </source>
</reference>
<reference key="9">
    <citation type="journal article" date="2007" name="J. Proteome Res.">
        <title>Large-scale phosphorylation analysis of alpha-factor-arrested Saccharomyces cerevisiae.</title>
        <authorList>
            <person name="Li X."/>
            <person name="Gerber S.A."/>
            <person name="Rudner A.D."/>
            <person name="Beausoleil S.A."/>
            <person name="Haas W."/>
            <person name="Villen J."/>
            <person name="Elias J.E."/>
            <person name="Gygi S.P."/>
        </authorList>
    </citation>
    <scope>IDENTIFICATION BY MASS SPECTROMETRY [LARGE SCALE ANALYSIS]</scope>
    <source>
        <strain>ADR376</strain>
    </source>
</reference>
<reference key="10">
    <citation type="journal article" date="2008" name="J. Biol. Chem.">
        <title>An unconventional diacylglycerol kinase that regulates phospholipid synthesis and nuclear membrane growth.</title>
        <authorList>
            <person name="Han G.-S."/>
            <person name="O'Hara L."/>
            <person name="Carman G.M."/>
            <person name="Siniossoglou S."/>
        </authorList>
    </citation>
    <scope>FUNCTION</scope>
    <scope>CATALYTIC ACTIVITY</scope>
    <scope>SUBCELLULAR LOCATION</scope>
    <scope>TRANSMEMBRANE DOMAINS</scope>
    <scope>OVEREXPRESSION PHENOTYPE</scope>
    <scope>KNOCKOUT</scope>
    <scope>MUTAGENESIS OF ASP-177</scope>
</reference>
<reference key="11">
    <citation type="journal article" date="2008" name="J. Biol. Chem.">
        <title>Characterization of the yeast DGK1-encoded CTP-dependent diacylglycerol kinase.</title>
        <authorList>
            <person name="Han G.-S."/>
            <person name="O'Hara L."/>
            <person name="Siniossoglou S."/>
            <person name="Carman G.M."/>
        </authorList>
    </citation>
    <scope>SYNTHESIS OF 133-145 AND 188-201</scope>
    <scope>CATALYTIC ACTIVITY</scope>
    <scope>COFACTOR</scope>
    <scope>ACTIVITY REGULATION</scope>
    <scope>BIOPHYSICOCHEMICAL PROPERTIES</scope>
    <scope>MUTAGENESIS OF 1-MET--GLY-66; 1-MET--THR-70; 1-MET--LYS-77; ARG-76; LYS-77; ASP-177 AND GLY-184</scope>
</reference>
<reference key="12">
    <citation type="journal article" date="2009" name="Science">
        <title>Global analysis of Cdk1 substrate phosphorylation sites provides insights into evolution.</title>
        <authorList>
            <person name="Holt L.J."/>
            <person name="Tuch B.B."/>
            <person name="Villen J."/>
            <person name="Johnson A.D."/>
            <person name="Gygi S.P."/>
            <person name="Morgan D.O."/>
        </authorList>
    </citation>
    <scope>PHOSPHORYLATION [LARGE SCALE ANALYSIS] AT SER-44; SER-45 AND SER-46</scope>
    <scope>IDENTIFICATION BY MASS SPECTROMETRY [LARGE SCALE ANALYSIS]</scope>
</reference>
<reference key="13">
    <citation type="journal article" date="2011" name="J. Biol. Chem.">
        <title>DGK1-encoded diacylglycerol kinase activity is required for phospholipid synthesis during growth resumption from stationary phase in Saccharomyces cerevisiae.</title>
        <authorList>
            <person name="Fakas S."/>
            <person name="Konstantinou C."/>
            <person name="Carman G.M."/>
        </authorList>
    </citation>
    <scope>FUNCTION</scope>
</reference>
<reference key="14">
    <citation type="journal article" date="2016" name="J. Biol. Chem.">
        <title>Phosphorylation of Dgk1 diacylglycerol kinase by casein kinase II regulates phosphatidic acid production in Saccharomyces cerevisiae.</title>
        <authorList>
            <person name="Qiu Y."/>
            <person name="Hassaninasab A."/>
            <person name="Han G.S."/>
            <person name="Carman G.M."/>
        </authorList>
    </citation>
    <scope>FUNCTION</scope>
    <scope>PHOSPHORYLATION AT SER-45 AND SER-46</scope>
    <scope>MUTAGENESIS OF 45-SER-SER-46 AND SER-46</scope>
</reference>
<organism>
    <name type="scientific">Saccharomyces cerevisiae (strain ATCC 204508 / S288c)</name>
    <name type="common">Baker's yeast</name>
    <dbReference type="NCBI Taxonomy" id="559292"/>
    <lineage>
        <taxon>Eukaryota</taxon>
        <taxon>Fungi</taxon>
        <taxon>Dikarya</taxon>
        <taxon>Ascomycota</taxon>
        <taxon>Saccharomycotina</taxon>
        <taxon>Saccharomycetes</taxon>
        <taxon>Saccharomycetales</taxon>
        <taxon>Saccharomycetaceae</taxon>
        <taxon>Saccharomyces</taxon>
    </lineage>
</organism>